<keyword id="KW-0997">Cell inner membrane</keyword>
<keyword id="KW-1003">Cell membrane</keyword>
<keyword id="KW-1015">Disulfide bond</keyword>
<keyword id="KW-0249">Electron transport</keyword>
<keyword id="KW-0472">Membrane</keyword>
<keyword id="KW-0560">Oxidoreductase</keyword>
<keyword id="KW-0676">Redox-active center</keyword>
<keyword id="KW-0812">Transmembrane</keyword>
<keyword id="KW-1133">Transmembrane helix</keyword>
<keyword id="KW-0813">Transport</keyword>
<dbReference type="EMBL" id="AE017220">
    <property type="protein sequence ID" value="AAX67044.1"/>
    <property type="molecule type" value="Genomic_DNA"/>
</dbReference>
<dbReference type="RefSeq" id="WP_000345576.1">
    <property type="nucleotide sequence ID" value="NC_006905.1"/>
</dbReference>
<dbReference type="KEGG" id="sec:SCH_3138"/>
<dbReference type="HOGENOM" id="CLU_090583_1_0_6"/>
<dbReference type="Proteomes" id="UP000000538">
    <property type="component" value="Chromosome"/>
</dbReference>
<dbReference type="GO" id="GO:0005886">
    <property type="term" value="C:plasma membrane"/>
    <property type="evidence" value="ECO:0007669"/>
    <property type="project" value="UniProtKB-SubCell"/>
</dbReference>
<dbReference type="GO" id="GO:0015035">
    <property type="term" value="F:protein-disulfide reductase activity"/>
    <property type="evidence" value="ECO:0007669"/>
    <property type="project" value="UniProtKB-UniRule"/>
</dbReference>
<dbReference type="GO" id="GO:0006457">
    <property type="term" value="P:protein folding"/>
    <property type="evidence" value="ECO:0007669"/>
    <property type="project" value="InterPro"/>
</dbReference>
<dbReference type="Gene3D" id="1.20.1550.10">
    <property type="entry name" value="DsbB-like"/>
    <property type="match status" value="1"/>
</dbReference>
<dbReference type="HAMAP" id="MF_01311">
    <property type="entry name" value="DsbI"/>
    <property type="match status" value="1"/>
</dbReference>
<dbReference type="InterPro" id="IPR003752">
    <property type="entry name" value="DiS_bond_form_DsbB/BdbC"/>
</dbReference>
<dbReference type="InterPro" id="IPR023792">
    <property type="entry name" value="DiS_OxRdtase_Dsbl"/>
</dbReference>
<dbReference type="InterPro" id="IPR050183">
    <property type="entry name" value="DsbB"/>
</dbReference>
<dbReference type="InterPro" id="IPR023380">
    <property type="entry name" value="DsbB-like_sf"/>
</dbReference>
<dbReference type="NCBIfam" id="NF003304">
    <property type="entry name" value="PRK04307.1"/>
    <property type="match status" value="1"/>
</dbReference>
<dbReference type="PANTHER" id="PTHR36570">
    <property type="entry name" value="DISULFIDE BOND FORMATION PROTEIN B"/>
    <property type="match status" value="1"/>
</dbReference>
<dbReference type="PANTHER" id="PTHR36570:SF1">
    <property type="entry name" value="PROTEIN-DISULFIDE OXIDOREDUCTASE DSBI"/>
    <property type="match status" value="1"/>
</dbReference>
<dbReference type="Pfam" id="PF02600">
    <property type="entry name" value="DsbB"/>
    <property type="match status" value="1"/>
</dbReference>
<dbReference type="SUPFAM" id="SSF158442">
    <property type="entry name" value="DsbB-like"/>
    <property type="match status" value="1"/>
</dbReference>
<name>DSBI_SALCH</name>
<reference key="1">
    <citation type="journal article" date="2005" name="Nucleic Acids Res.">
        <title>The genome sequence of Salmonella enterica serovar Choleraesuis, a highly invasive and resistant zoonotic pathogen.</title>
        <authorList>
            <person name="Chiu C.-H."/>
            <person name="Tang P."/>
            <person name="Chu C."/>
            <person name="Hu S."/>
            <person name="Bao Q."/>
            <person name="Yu J."/>
            <person name="Chou Y.-Y."/>
            <person name="Wang H.-S."/>
            <person name="Lee Y.-S."/>
        </authorList>
    </citation>
    <scope>NUCLEOTIDE SEQUENCE [LARGE SCALE GENOMIC DNA]</scope>
    <source>
        <strain>SC-B67</strain>
    </source>
</reference>
<proteinExistence type="inferred from homology"/>
<sequence length="225" mass="25343">MDFIKGLWRDLRARPVDTLVRWQEQRFLWLLMAIAMGGLIILAHSFFQIYLYMAPCEQCVYIRYAMFVMVIGGVIAAINPKNIVLKLIGCIAAFYGSIMGIKFSIKLNGIHHAVHNADPDSLFGVQGCSTDPTFPFNLPLAEWAPEWFKPTGDCGYDAPIVPDGVTLSSVQQWFVDLYQQSEGWYLLPPWHFMNMAQACMLAFGLCLILLLVMSGAWALKLARGK</sequence>
<accession>Q57JR8</accession>
<protein>
    <recommendedName>
        <fullName evidence="1">Protein-disulfide oxidoreductase DsbI</fullName>
    </recommendedName>
</protein>
<gene>
    <name evidence="1" type="primary">dsbI</name>
    <name type="ordered locus">SCH_3138</name>
</gene>
<organism>
    <name type="scientific">Salmonella choleraesuis (strain SC-B67)</name>
    <dbReference type="NCBI Taxonomy" id="321314"/>
    <lineage>
        <taxon>Bacteria</taxon>
        <taxon>Pseudomonadati</taxon>
        <taxon>Pseudomonadota</taxon>
        <taxon>Gammaproteobacteria</taxon>
        <taxon>Enterobacterales</taxon>
        <taxon>Enterobacteriaceae</taxon>
        <taxon>Salmonella</taxon>
    </lineage>
</organism>
<feature type="chain" id="PRO_0000295645" description="Protein-disulfide oxidoreductase DsbI">
    <location>
        <begin position="1"/>
        <end position="225"/>
    </location>
</feature>
<feature type="transmembrane region" description="Helical" evidence="1">
    <location>
        <begin position="27"/>
        <end position="47"/>
    </location>
</feature>
<feature type="transmembrane region" description="Helical" evidence="1">
    <location>
        <begin position="65"/>
        <end position="85"/>
    </location>
</feature>
<feature type="transmembrane region" description="Helical" evidence="1">
    <location>
        <begin position="87"/>
        <end position="107"/>
    </location>
</feature>
<feature type="transmembrane region" description="Helical" evidence="1">
    <location>
        <begin position="199"/>
        <end position="219"/>
    </location>
</feature>
<feature type="disulfide bond" description="Redox-active" evidence="1">
    <location>
        <begin position="56"/>
        <end position="59"/>
    </location>
</feature>
<feature type="disulfide bond" description="Redox-active" evidence="1">
    <location>
        <begin position="128"/>
        <end position="154"/>
    </location>
</feature>
<comment type="function">
    <text evidence="1">Required for disulfide bond formation in some proteins. Part of a redox system composed of DsbI and DsbL that mediates formation of an essential disulfide bond in AssT.</text>
</comment>
<comment type="subunit">
    <text evidence="1">Interacts with DsbL.</text>
</comment>
<comment type="subcellular location">
    <subcellularLocation>
        <location evidence="1">Cell inner membrane</location>
        <topology evidence="1">Multi-pass membrane protein</topology>
    </subcellularLocation>
</comment>
<comment type="similarity">
    <text evidence="1">Belongs to the DsbB family. DsbI subfamily.</text>
</comment>
<evidence type="ECO:0000255" key="1">
    <source>
        <dbReference type="HAMAP-Rule" id="MF_01311"/>
    </source>
</evidence>